<reference key="1">
    <citation type="journal article" date="2003" name="Genome Res.">
        <title>Comparative genome analysis of Vibrio vulnificus, a marine pathogen.</title>
        <authorList>
            <person name="Chen C.-Y."/>
            <person name="Wu K.-M."/>
            <person name="Chang Y.-C."/>
            <person name="Chang C.-H."/>
            <person name="Tsai H.-C."/>
            <person name="Liao T.-L."/>
            <person name="Liu Y.-M."/>
            <person name="Chen H.-J."/>
            <person name="Shen A.B.-T."/>
            <person name="Li J.-C."/>
            <person name="Su T.-L."/>
            <person name="Shao C.-P."/>
            <person name="Lee C.-T."/>
            <person name="Hor L.-I."/>
            <person name="Tsai S.-F."/>
        </authorList>
    </citation>
    <scope>NUCLEOTIDE SEQUENCE [LARGE SCALE GENOMIC DNA]</scope>
    <source>
        <strain>YJ016</strain>
    </source>
</reference>
<sequence>MQNQRIRIRLKAFDYKLIDASTAEIVETAKRTGAQVRGPIPLPTRKERFTVLISPHVNKKARDQYEIRTHKRLIDIVEPTDKTVDALMRLDLAAGVDVQISLG</sequence>
<accession>Q7MPI9</accession>
<protein>
    <recommendedName>
        <fullName evidence="1">Small ribosomal subunit protein uS10</fullName>
    </recommendedName>
    <alternativeName>
        <fullName evidence="2">30S ribosomal protein S10</fullName>
    </alternativeName>
</protein>
<proteinExistence type="inferred from homology"/>
<gene>
    <name evidence="1" type="primary">rpsJ</name>
    <name type="ordered locus">VV0374</name>
</gene>
<evidence type="ECO:0000255" key="1">
    <source>
        <dbReference type="HAMAP-Rule" id="MF_00508"/>
    </source>
</evidence>
<evidence type="ECO:0000305" key="2"/>
<organism>
    <name type="scientific">Vibrio vulnificus (strain YJ016)</name>
    <dbReference type="NCBI Taxonomy" id="196600"/>
    <lineage>
        <taxon>Bacteria</taxon>
        <taxon>Pseudomonadati</taxon>
        <taxon>Pseudomonadota</taxon>
        <taxon>Gammaproteobacteria</taxon>
        <taxon>Vibrionales</taxon>
        <taxon>Vibrionaceae</taxon>
        <taxon>Vibrio</taxon>
    </lineage>
</organism>
<dbReference type="EMBL" id="BA000037">
    <property type="protein sequence ID" value="BAC93138.1"/>
    <property type="molecule type" value="Genomic_DNA"/>
</dbReference>
<dbReference type="RefSeq" id="WP_004410492.1">
    <property type="nucleotide sequence ID" value="NC_005139.1"/>
</dbReference>
<dbReference type="SMR" id="Q7MPI9"/>
<dbReference type="STRING" id="672.VV93_v1c03450"/>
<dbReference type="GeneID" id="97171180"/>
<dbReference type="KEGG" id="vvy:VV0374"/>
<dbReference type="eggNOG" id="COG0051">
    <property type="taxonomic scope" value="Bacteria"/>
</dbReference>
<dbReference type="HOGENOM" id="CLU_122625_1_3_6"/>
<dbReference type="Proteomes" id="UP000002675">
    <property type="component" value="Chromosome I"/>
</dbReference>
<dbReference type="GO" id="GO:1990904">
    <property type="term" value="C:ribonucleoprotein complex"/>
    <property type="evidence" value="ECO:0007669"/>
    <property type="project" value="UniProtKB-KW"/>
</dbReference>
<dbReference type="GO" id="GO:0005840">
    <property type="term" value="C:ribosome"/>
    <property type="evidence" value="ECO:0007669"/>
    <property type="project" value="UniProtKB-KW"/>
</dbReference>
<dbReference type="GO" id="GO:0003735">
    <property type="term" value="F:structural constituent of ribosome"/>
    <property type="evidence" value="ECO:0007669"/>
    <property type="project" value="InterPro"/>
</dbReference>
<dbReference type="GO" id="GO:0000049">
    <property type="term" value="F:tRNA binding"/>
    <property type="evidence" value="ECO:0007669"/>
    <property type="project" value="UniProtKB-UniRule"/>
</dbReference>
<dbReference type="GO" id="GO:0006412">
    <property type="term" value="P:translation"/>
    <property type="evidence" value="ECO:0007669"/>
    <property type="project" value="UniProtKB-UniRule"/>
</dbReference>
<dbReference type="FunFam" id="3.30.70.600:FF:000001">
    <property type="entry name" value="30S ribosomal protein S10"/>
    <property type="match status" value="1"/>
</dbReference>
<dbReference type="Gene3D" id="3.30.70.600">
    <property type="entry name" value="Ribosomal protein S10 domain"/>
    <property type="match status" value="1"/>
</dbReference>
<dbReference type="HAMAP" id="MF_00508">
    <property type="entry name" value="Ribosomal_uS10"/>
    <property type="match status" value="1"/>
</dbReference>
<dbReference type="InterPro" id="IPR001848">
    <property type="entry name" value="Ribosomal_uS10"/>
</dbReference>
<dbReference type="InterPro" id="IPR018268">
    <property type="entry name" value="Ribosomal_uS10_CS"/>
</dbReference>
<dbReference type="InterPro" id="IPR027486">
    <property type="entry name" value="Ribosomal_uS10_dom"/>
</dbReference>
<dbReference type="InterPro" id="IPR036838">
    <property type="entry name" value="Ribosomal_uS10_dom_sf"/>
</dbReference>
<dbReference type="NCBIfam" id="NF001861">
    <property type="entry name" value="PRK00596.1"/>
    <property type="match status" value="1"/>
</dbReference>
<dbReference type="NCBIfam" id="TIGR01049">
    <property type="entry name" value="rpsJ_bact"/>
    <property type="match status" value="1"/>
</dbReference>
<dbReference type="PANTHER" id="PTHR11700">
    <property type="entry name" value="30S RIBOSOMAL PROTEIN S10 FAMILY MEMBER"/>
    <property type="match status" value="1"/>
</dbReference>
<dbReference type="Pfam" id="PF00338">
    <property type="entry name" value="Ribosomal_S10"/>
    <property type="match status" value="1"/>
</dbReference>
<dbReference type="PRINTS" id="PR00971">
    <property type="entry name" value="RIBOSOMALS10"/>
</dbReference>
<dbReference type="SMART" id="SM01403">
    <property type="entry name" value="Ribosomal_S10"/>
    <property type="match status" value="1"/>
</dbReference>
<dbReference type="SUPFAM" id="SSF54999">
    <property type="entry name" value="Ribosomal protein S10"/>
    <property type="match status" value="1"/>
</dbReference>
<dbReference type="PROSITE" id="PS00361">
    <property type="entry name" value="RIBOSOMAL_S10"/>
    <property type="match status" value="1"/>
</dbReference>
<feature type="chain" id="PRO_0000146632" description="Small ribosomal subunit protein uS10">
    <location>
        <begin position="1"/>
        <end position="103"/>
    </location>
</feature>
<keyword id="KW-0687">Ribonucleoprotein</keyword>
<keyword id="KW-0689">Ribosomal protein</keyword>
<name>RS10_VIBVY</name>
<comment type="function">
    <text evidence="1">Involved in the binding of tRNA to the ribosomes.</text>
</comment>
<comment type="subunit">
    <text evidence="1">Part of the 30S ribosomal subunit.</text>
</comment>
<comment type="similarity">
    <text evidence="1">Belongs to the universal ribosomal protein uS10 family.</text>
</comment>